<gene>
    <name evidence="1" type="primary">secA</name>
    <name type="ordered locus">Dvul_2156</name>
</gene>
<evidence type="ECO:0000255" key="1">
    <source>
        <dbReference type="HAMAP-Rule" id="MF_01382"/>
    </source>
</evidence>
<evidence type="ECO:0000256" key="2">
    <source>
        <dbReference type="SAM" id="MobiDB-lite"/>
    </source>
</evidence>
<comment type="function">
    <text evidence="1">Part of the Sec protein translocase complex. Interacts with the SecYEG preprotein conducting channel. Has a central role in coupling the hydrolysis of ATP to the transfer of proteins into and across the cell membrane, serving as an ATP-driven molecular motor driving the stepwise translocation of polypeptide chains across the membrane.</text>
</comment>
<comment type="catalytic activity">
    <reaction evidence="1">
        <text>ATP + H2O + cellular proteinSide 1 = ADP + phosphate + cellular proteinSide 2.</text>
        <dbReference type="EC" id="7.4.2.8"/>
    </reaction>
</comment>
<comment type="cofactor">
    <cofactor evidence="1">
        <name>Zn(2+)</name>
        <dbReference type="ChEBI" id="CHEBI:29105"/>
    </cofactor>
    <text evidence="1">May bind 1 zinc ion per subunit.</text>
</comment>
<comment type="subunit">
    <text evidence="1">Monomer and homodimer. Part of the essential Sec protein translocation apparatus which comprises SecA, SecYEG and auxiliary proteins SecDF-YajC and YidC.</text>
</comment>
<comment type="subcellular location">
    <subcellularLocation>
        <location evidence="1">Cell inner membrane</location>
        <topology evidence="1">Peripheral membrane protein</topology>
        <orientation evidence="1">Cytoplasmic side</orientation>
    </subcellularLocation>
    <subcellularLocation>
        <location evidence="1">Cytoplasm</location>
    </subcellularLocation>
    <text evidence="1">Distribution is 50-50.</text>
</comment>
<comment type="similarity">
    <text evidence="1">Belongs to the SecA family.</text>
</comment>
<name>SECA_NITV4</name>
<proteinExistence type="inferred from homology"/>
<protein>
    <recommendedName>
        <fullName evidence="1">Protein translocase subunit SecA</fullName>
        <ecNumber evidence="1">7.4.2.8</ecNumber>
    </recommendedName>
</protein>
<dbReference type="EC" id="7.4.2.8" evidence="1"/>
<dbReference type="EMBL" id="CP000527">
    <property type="protein sequence ID" value="ABM29172.1"/>
    <property type="molecule type" value="Genomic_DNA"/>
</dbReference>
<dbReference type="RefSeq" id="WP_011792689.1">
    <property type="nucleotide sequence ID" value="NC_008751.1"/>
</dbReference>
<dbReference type="SMR" id="A1VFF6"/>
<dbReference type="KEGG" id="dvl:Dvul_2156"/>
<dbReference type="HOGENOM" id="CLU_005314_3_0_7"/>
<dbReference type="Proteomes" id="UP000009173">
    <property type="component" value="Chromosome"/>
</dbReference>
<dbReference type="GO" id="GO:0031522">
    <property type="term" value="C:cell envelope Sec protein transport complex"/>
    <property type="evidence" value="ECO:0007669"/>
    <property type="project" value="TreeGrafter"/>
</dbReference>
<dbReference type="GO" id="GO:0005829">
    <property type="term" value="C:cytosol"/>
    <property type="evidence" value="ECO:0007669"/>
    <property type="project" value="TreeGrafter"/>
</dbReference>
<dbReference type="GO" id="GO:0005886">
    <property type="term" value="C:plasma membrane"/>
    <property type="evidence" value="ECO:0007669"/>
    <property type="project" value="UniProtKB-SubCell"/>
</dbReference>
<dbReference type="GO" id="GO:0005524">
    <property type="term" value="F:ATP binding"/>
    <property type="evidence" value="ECO:0007669"/>
    <property type="project" value="UniProtKB-UniRule"/>
</dbReference>
<dbReference type="GO" id="GO:0046872">
    <property type="term" value="F:metal ion binding"/>
    <property type="evidence" value="ECO:0007669"/>
    <property type="project" value="UniProtKB-KW"/>
</dbReference>
<dbReference type="GO" id="GO:0008564">
    <property type="term" value="F:protein-exporting ATPase activity"/>
    <property type="evidence" value="ECO:0007669"/>
    <property type="project" value="UniProtKB-EC"/>
</dbReference>
<dbReference type="GO" id="GO:0065002">
    <property type="term" value="P:intracellular protein transmembrane transport"/>
    <property type="evidence" value="ECO:0007669"/>
    <property type="project" value="UniProtKB-UniRule"/>
</dbReference>
<dbReference type="GO" id="GO:0017038">
    <property type="term" value="P:protein import"/>
    <property type="evidence" value="ECO:0007669"/>
    <property type="project" value="InterPro"/>
</dbReference>
<dbReference type="GO" id="GO:0006605">
    <property type="term" value="P:protein targeting"/>
    <property type="evidence" value="ECO:0007669"/>
    <property type="project" value="UniProtKB-UniRule"/>
</dbReference>
<dbReference type="GO" id="GO:0043952">
    <property type="term" value="P:protein transport by the Sec complex"/>
    <property type="evidence" value="ECO:0007669"/>
    <property type="project" value="TreeGrafter"/>
</dbReference>
<dbReference type="CDD" id="cd17928">
    <property type="entry name" value="DEXDc_SecA"/>
    <property type="match status" value="1"/>
</dbReference>
<dbReference type="CDD" id="cd18803">
    <property type="entry name" value="SF2_C_secA"/>
    <property type="match status" value="1"/>
</dbReference>
<dbReference type="FunFam" id="3.40.50.300:FF:000694">
    <property type="entry name" value="Preprotein translocase subunit SecA"/>
    <property type="match status" value="1"/>
</dbReference>
<dbReference type="FunFam" id="3.90.1440.10:FF:000001">
    <property type="entry name" value="Preprotein translocase subunit SecA"/>
    <property type="match status" value="1"/>
</dbReference>
<dbReference type="FunFam" id="3.40.50.300:FF:000334">
    <property type="entry name" value="Protein translocase subunit SecA"/>
    <property type="match status" value="1"/>
</dbReference>
<dbReference type="Gene3D" id="1.10.3060.10">
    <property type="entry name" value="Helical scaffold and wing domains of SecA"/>
    <property type="match status" value="1"/>
</dbReference>
<dbReference type="Gene3D" id="3.40.50.300">
    <property type="entry name" value="P-loop containing nucleotide triphosphate hydrolases"/>
    <property type="match status" value="3"/>
</dbReference>
<dbReference type="Gene3D" id="3.90.1440.10">
    <property type="entry name" value="SecA, preprotein cross-linking domain"/>
    <property type="match status" value="1"/>
</dbReference>
<dbReference type="HAMAP" id="MF_01382">
    <property type="entry name" value="SecA"/>
    <property type="match status" value="1"/>
</dbReference>
<dbReference type="InterPro" id="IPR014001">
    <property type="entry name" value="Helicase_ATP-bd"/>
</dbReference>
<dbReference type="InterPro" id="IPR001650">
    <property type="entry name" value="Helicase_C-like"/>
</dbReference>
<dbReference type="InterPro" id="IPR027417">
    <property type="entry name" value="P-loop_NTPase"/>
</dbReference>
<dbReference type="InterPro" id="IPR004027">
    <property type="entry name" value="SEC_C_motif"/>
</dbReference>
<dbReference type="InterPro" id="IPR000185">
    <property type="entry name" value="SecA"/>
</dbReference>
<dbReference type="InterPro" id="IPR020937">
    <property type="entry name" value="SecA_CS"/>
</dbReference>
<dbReference type="InterPro" id="IPR011115">
    <property type="entry name" value="SecA_DEAD"/>
</dbReference>
<dbReference type="InterPro" id="IPR014018">
    <property type="entry name" value="SecA_motor_DEAD"/>
</dbReference>
<dbReference type="InterPro" id="IPR011130">
    <property type="entry name" value="SecA_preprotein_X-link_dom"/>
</dbReference>
<dbReference type="InterPro" id="IPR044722">
    <property type="entry name" value="SecA_SF2_C"/>
</dbReference>
<dbReference type="InterPro" id="IPR011116">
    <property type="entry name" value="SecA_Wing/Scaffold"/>
</dbReference>
<dbReference type="InterPro" id="IPR036266">
    <property type="entry name" value="SecA_Wing/Scaffold_sf"/>
</dbReference>
<dbReference type="InterPro" id="IPR036670">
    <property type="entry name" value="SecA_X-link_sf"/>
</dbReference>
<dbReference type="NCBIfam" id="NF006630">
    <property type="entry name" value="PRK09200.1"/>
    <property type="match status" value="1"/>
</dbReference>
<dbReference type="NCBIfam" id="NF009538">
    <property type="entry name" value="PRK12904.1"/>
    <property type="match status" value="1"/>
</dbReference>
<dbReference type="NCBIfam" id="TIGR00963">
    <property type="entry name" value="secA"/>
    <property type="match status" value="1"/>
</dbReference>
<dbReference type="PANTHER" id="PTHR30612:SF0">
    <property type="entry name" value="CHLOROPLAST PROTEIN-TRANSPORTING ATPASE"/>
    <property type="match status" value="1"/>
</dbReference>
<dbReference type="PANTHER" id="PTHR30612">
    <property type="entry name" value="SECA INNER MEMBRANE COMPONENT OF SEC PROTEIN SECRETION SYSTEM"/>
    <property type="match status" value="1"/>
</dbReference>
<dbReference type="Pfam" id="PF21090">
    <property type="entry name" value="P-loop_SecA"/>
    <property type="match status" value="1"/>
</dbReference>
<dbReference type="Pfam" id="PF02810">
    <property type="entry name" value="SEC-C"/>
    <property type="match status" value="1"/>
</dbReference>
<dbReference type="Pfam" id="PF07517">
    <property type="entry name" value="SecA_DEAD"/>
    <property type="match status" value="1"/>
</dbReference>
<dbReference type="Pfam" id="PF01043">
    <property type="entry name" value="SecA_PP_bind"/>
    <property type="match status" value="1"/>
</dbReference>
<dbReference type="Pfam" id="PF07516">
    <property type="entry name" value="SecA_SW"/>
    <property type="match status" value="1"/>
</dbReference>
<dbReference type="PRINTS" id="PR00906">
    <property type="entry name" value="SECA"/>
</dbReference>
<dbReference type="SMART" id="SM00957">
    <property type="entry name" value="SecA_DEAD"/>
    <property type="match status" value="1"/>
</dbReference>
<dbReference type="SMART" id="SM00958">
    <property type="entry name" value="SecA_PP_bind"/>
    <property type="match status" value="1"/>
</dbReference>
<dbReference type="SUPFAM" id="SSF81886">
    <property type="entry name" value="Helical scaffold and wing domains of SecA"/>
    <property type="match status" value="1"/>
</dbReference>
<dbReference type="SUPFAM" id="SSF52540">
    <property type="entry name" value="P-loop containing nucleoside triphosphate hydrolases"/>
    <property type="match status" value="2"/>
</dbReference>
<dbReference type="SUPFAM" id="SSF81767">
    <property type="entry name" value="Pre-protein crosslinking domain of SecA"/>
    <property type="match status" value="1"/>
</dbReference>
<dbReference type="PROSITE" id="PS01312">
    <property type="entry name" value="SECA"/>
    <property type="match status" value="1"/>
</dbReference>
<dbReference type="PROSITE" id="PS51196">
    <property type="entry name" value="SECA_MOTOR_DEAD"/>
    <property type="match status" value="1"/>
</dbReference>
<sequence>MLGFLFKKVFGSKNDRYIKRLRPIVAAINALEPQMQSLRDEDFPVRIAEYRQQVEEGRKLDDMLPEVFALVREAGKRVFNMRHFDVQLVGGMALHHGKIAEMKTGEGKTLVATLPVVLNALTGKGVHVVTVNDYLAKRDAAWMGQLYNFLGLSVGVIVHGLDDEQRKAAYGADITYGTNNEFGFDYLRDNMKFYAEQLVQRGHNFAIVDEVDSILIDEARTPLIISGASEESTGLYRHMDEIVRKLTRDTHFTVDEKARTAMLTDEGVAFCETLVGIDNLYDPGNITTQHHLMQALKAHNLFRRDVDYIVKEGQVVIVDEFTGRLMPGRRFSDGLHQALEAKEAVKIEAENQTLASITFQNYFRMYAKLAGMTGTADTEAVEFHQIYSLEVVSIPTNKPMQRKDFADAIYRTKREKYDAIAQAIAELHKAGQPVLVGTISIETSELLSTMLKKTGVPHSVLNAKHHEKEAEIVALAGQRGHVTIATNMAGRGTDIVLGEGVRELGGLHILGTERHESRRIDNQLRGRSGRQGDPGSSRFYLSLEDDLMRLFGSERISGLMEKLGMEEGEPIEARMVSRAIENAQKRVEGHNFEIRKTLLDYDNVMNQQREVIYTLRRDAMSAPDLGPTMEEFLDDVLEDVYAPAEGGEAPSADTVAAVWGRLADVCNITRVMQPAPALPTRDEARAAVLSILHELREDTGESYRDIIRYFMLEELDRCWKEHLRNMDHLRDGIGLRGYGQRDPKLEYKREGFAMFQEMLFRIKEGVFRSLTRLRVQRVEEEAFRHKEQPAAVAYSGGEAEAGPAQPHREDPKVGRNDLCPCGSGRKYKKCCGA</sequence>
<reference key="1">
    <citation type="journal article" date="2009" name="Environ. Microbiol.">
        <title>Contribution of mobile genetic elements to Desulfovibrio vulgaris genome plasticity.</title>
        <authorList>
            <person name="Walker C.B."/>
            <person name="Stolyar S."/>
            <person name="Chivian D."/>
            <person name="Pinel N."/>
            <person name="Gabster J.A."/>
            <person name="Dehal P.S."/>
            <person name="He Z."/>
            <person name="Yang Z.K."/>
            <person name="Yen H.C."/>
            <person name="Zhou J."/>
            <person name="Wall J.D."/>
            <person name="Hazen T.C."/>
            <person name="Arkin A.P."/>
            <person name="Stahl D.A."/>
        </authorList>
    </citation>
    <scope>NUCLEOTIDE SEQUENCE [LARGE SCALE GENOMIC DNA]</scope>
    <source>
        <strain>DP4</strain>
    </source>
</reference>
<feature type="chain" id="PRO_0000318351" description="Protein translocase subunit SecA">
    <location>
        <begin position="1"/>
        <end position="833"/>
    </location>
</feature>
<feature type="region of interest" description="Disordered" evidence="2">
    <location>
        <begin position="789"/>
        <end position="816"/>
    </location>
</feature>
<feature type="compositionally biased region" description="Basic and acidic residues" evidence="2">
    <location>
        <begin position="806"/>
        <end position="815"/>
    </location>
</feature>
<feature type="binding site" evidence="1">
    <location>
        <position position="87"/>
    </location>
    <ligand>
        <name>ATP</name>
        <dbReference type="ChEBI" id="CHEBI:30616"/>
    </ligand>
</feature>
<feature type="binding site" evidence="1">
    <location>
        <begin position="105"/>
        <end position="109"/>
    </location>
    <ligand>
        <name>ATP</name>
        <dbReference type="ChEBI" id="CHEBI:30616"/>
    </ligand>
</feature>
<feature type="binding site" evidence="1">
    <location>
        <position position="494"/>
    </location>
    <ligand>
        <name>ATP</name>
        <dbReference type="ChEBI" id="CHEBI:30616"/>
    </ligand>
</feature>
<feature type="binding site" evidence="1">
    <location>
        <position position="819"/>
    </location>
    <ligand>
        <name>Zn(2+)</name>
        <dbReference type="ChEBI" id="CHEBI:29105"/>
    </ligand>
</feature>
<feature type="binding site" evidence="1">
    <location>
        <position position="821"/>
    </location>
    <ligand>
        <name>Zn(2+)</name>
        <dbReference type="ChEBI" id="CHEBI:29105"/>
    </ligand>
</feature>
<feature type="binding site" evidence="1">
    <location>
        <position position="830"/>
    </location>
    <ligand>
        <name>Zn(2+)</name>
        <dbReference type="ChEBI" id="CHEBI:29105"/>
    </ligand>
</feature>
<feature type="binding site" evidence="1">
    <location>
        <position position="831"/>
    </location>
    <ligand>
        <name>Zn(2+)</name>
        <dbReference type="ChEBI" id="CHEBI:29105"/>
    </ligand>
</feature>
<keyword id="KW-0067">ATP-binding</keyword>
<keyword id="KW-0997">Cell inner membrane</keyword>
<keyword id="KW-1003">Cell membrane</keyword>
<keyword id="KW-0963">Cytoplasm</keyword>
<keyword id="KW-0472">Membrane</keyword>
<keyword id="KW-0479">Metal-binding</keyword>
<keyword id="KW-0547">Nucleotide-binding</keyword>
<keyword id="KW-0653">Protein transport</keyword>
<keyword id="KW-1278">Translocase</keyword>
<keyword id="KW-0811">Translocation</keyword>
<keyword id="KW-0813">Transport</keyword>
<keyword id="KW-0862">Zinc</keyword>
<organism>
    <name type="scientific">Nitratidesulfovibrio vulgaris (strain DP4)</name>
    <name type="common">Desulfovibrio vulgaris</name>
    <dbReference type="NCBI Taxonomy" id="391774"/>
    <lineage>
        <taxon>Bacteria</taxon>
        <taxon>Pseudomonadati</taxon>
        <taxon>Thermodesulfobacteriota</taxon>
        <taxon>Desulfovibrionia</taxon>
        <taxon>Desulfovibrionales</taxon>
        <taxon>Desulfovibrionaceae</taxon>
        <taxon>Nitratidesulfovibrio</taxon>
    </lineage>
</organism>
<accession>A1VFF6</accession>